<accession>A4IM63</accession>
<feature type="chain" id="PRO_1000001767" description="Phosphate acyltransferase">
    <location>
        <begin position="1"/>
        <end position="328"/>
    </location>
</feature>
<sequence length="328" mass="34947">MNIAIDAMGGDHAPQEIVRGAARAAAHFSDIRITLIGDEAKIRPYLQNEERISIIHADEVIEATDEPVRAVRRKKNSSMVRMAEEVREGRADACISAGNTGALMAAGLFVVGRIAGIDRPALAPTLPTLDGKGFVFLDVGANVDARPEHLQQYALMGHVYAKQVRGIANPRIGLLNVGTEDQKGNETTKRAFALLKETNLHFIGNVEARDLLQGVADVVVADGFSGNVALKTIEGTAMALFSLLKQTLTSSVTAKLAAAALKPKLSGLKKMMDYSEYGGAALFGLNAPVIKAHGSSDANAIFHAVRQAREMVANDVIGTIKAELERTS</sequence>
<reference key="1">
    <citation type="journal article" date="2007" name="Proc. Natl. Acad. Sci. U.S.A.">
        <title>Genome and proteome of long-chain alkane degrading Geobacillus thermodenitrificans NG80-2 isolated from a deep-subsurface oil reservoir.</title>
        <authorList>
            <person name="Feng L."/>
            <person name="Wang W."/>
            <person name="Cheng J."/>
            <person name="Ren Y."/>
            <person name="Zhao G."/>
            <person name="Gao C."/>
            <person name="Tang Y."/>
            <person name="Liu X."/>
            <person name="Han W."/>
            <person name="Peng X."/>
            <person name="Liu R."/>
            <person name="Wang L."/>
        </authorList>
    </citation>
    <scope>NUCLEOTIDE SEQUENCE [LARGE SCALE GENOMIC DNA]</scope>
    <source>
        <strain>NG80-2</strain>
    </source>
</reference>
<gene>
    <name evidence="1" type="primary">plsX</name>
    <name type="ordered locus">GTNG_1041</name>
</gene>
<protein>
    <recommendedName>
        <fullName evidence="1">Phosphate acyltransferase</fullName>
        <ecNumber evidence="1">2.3.1.274</ecNumber>
    </recommendedName>
    <alternativeName>
        <fullName evidence="1">Acyl-ACP phosphotransacylase</fullName>
    </alternativeName>
    <alternativeName>
        <fullName evidence="1">Acyl-[acyl-carrier-protein]--phosphate acyltransferase</fullName>
    </alternativeName>
    <alternativeName>
        <fullName evidence="1">Phosphate-acyl-ACP acyltransferase</fullName>
    </alternativeName>
</protein>
<dbReference type="EC" id="2.3.1.274" evidence="1"/>
<dbReference type="EMBL" id="CP000557">
    <property type="protein sequence ID" value="ABO66417.1"/>
    <property type="molecule type" value="Genomic_DNA"/>
</dbReference>
<dbReference type="RefSeq" id="WP_008878623.1">
    <property type="nucleotide sequence ID" value="NC_009328.1"/>
</dbReference>
<dbReference type="SMR" id="A4IM63"/>
<dbReference type="KEGG" id="gtn:GTNG_1041"/>
<dbReference type="eggNOG" id="COG0416">
    <property type="taxonomic scope" value="Bacteria"/>
</dbReference>
<dbReference type="HOGENOM" id="CLU_039379_1_1_9"/>
<dbReference type="UniPathway" id="UPA00085"/>
<dbReference type="Proteomes" id="UP000001578">
    <property type="component" value="Chromosome"/>
</dbReference>
<dbReference type="GO" id="GO:0005737">
    <property type="term" value="C:cytoplasm"/>
    <property type="evidence" value="ECO:0007669"/>
    <property type="project" value="UniProtKB-SubCell"/>
</dbReference>
<dbReference type="GO" id="GO:0043811">
    <property type="term" value="F:phosphate:acyl-[acyl carrier protein] acyltransferase activity"/>
    <property type="evidence" value="ECO:0007669"/>
    <property type="project" value="UniProtKB-UniRule"/>
</dbReference>
<dbReference type="GO" id="GO:0006633">
    <property type="term" value="P:fatty acid biosynthetic process"/>
    <property type="evidence" value="ECO:0007669"/>
    <property type="project" value="UniProtKB-UniRule"/>
</dbReference>
<dbReference type="GO" id="GO:0008654">
    <property type="term" value="P:phospholipid biosynthetic process"/>
    <property type="evidence" value="ECO:0007669"/>
    <property type="project" value="UniProtKB-KW"/>
</dbReference>
<dbReference type="Gene3D" id="3.40.718.10">
    <property type="entry name" value="Isopropylmalate Dehydrogenase"/>
    <property type="match status" value="1"/>
</dbReference>
<dbReference type="HAMAP" id="MF_00019">
    <property type="entry name" value="PlsX"/>
    <property type="match status" value="1"/>
</dbReference>
<dbReference type="InterPro" id="IPR003664">
    <property type="entry name" value="FA_synthesis"/>
</dbReference>
<dbReference type="InterPro" id="IPR012281">
    <property type="entry name" value="Phospholipid_synth_PlsX-like"/>
</dbReference>
<dbReference type="NCBIfam" id="TIGR00182">
    <property type="entry name" value="plsX"/>
    <property type="match status" value="1"/>
</dbReference>
<dbReference type="PANTHER" id="PTHR30100">
    <property type="entry name" value="FATTY ACID/PHOSPHOLIPID SYNTHESIS PROTEIN PLSX"/>
    <property type="match status" value="1"/>
</dbReference>
<dbReference type="PANTHER" id="PTHR30100:SF1">
    <property type="entry name" value="PHOSPHATE ACYLTRANSFERASE"/>
    <property type="match status" value="1"/>
</dbReference>
<dbReference type="Pfam" id="PF02504">
    <property type="entry name" value="FA_synthesis"/>
    <property type="match status" value="1"/>
</dbReference>
<dbReference type="PIRSF" id="PIRSF002465">
    <property type="entry name" value="Phsphlp_syn_PlsX"/>
    <property type="match status" value="1"/>
</dbReference>
<dbReference type="SUPFAM" id="SSF53659">
    <property type="entry name" value="Isocitrate/Isopropylmalate dehydrogenase-like"/>
    <property type="match status" value="1"/>
</dbReference>
<evidence type="ECO:0000255" key="1">
    <source>
        <dbReference type="HAMAP-Rule" id="MF_00019"/>
    </source>
</evidence>
<proteinExistence type="inferred from homology"/>
<comment type="function">
    <text evidence="1">Catalyzes the reversible formation of acyl-phosphate (acyl-PO(4)) from acyl-[acyl-carrier-protein] (acyl-ACP). This enzyme utilizes acyl-ACP as fatty acyl donor, but not acyl-CoA.</text>
</comment>
<comment type="catalytic activity">
    <reaction evidence="1">
        <text>a fatty acyl-[ACP] + phosphate = an acyl phosphate + holo-[ACP]</text>
        <dbReference type="Rhea" id="RHEA:42292"/>
        <dbReference type="Rhea" id="RHEA-COMP:9685"/>
        <dbReference type="Rhea" id="RHEA-COMP:14125"/>
        <dbReference type="ChEBI" id="CHEBI:43474"/>
        <dbReference type="ChEBI" id="CHEBI:59918"/>
        <dbReference type="ChEBI" id="CHEBI:64479"/>
        <dbReference type="ChEBI" id="CHEBI:138651"/>
        <dbReference type="EC" id="2.3.1.274"/>
    </reaction>
</comment>
<comment type="pathway">
    <text evidence="1">Lipid metabolism; phospholipid metabolism.</text>
</comment>
<comment type="subunit">
    <text evidence="1">Homodimer. Probably interacts with PlsY.</text>
</comment>
<comment type="subcellular location">
    <subcellularLocation>
        <location evidence="1">Cytoplasm</location>
    </subcellularLocation>
    <text evidence="1">Associated with the membrane possibly through PlsY.</text>
</comment>
<comment type="similarity">
    <text evidence="1">Belongs to the PlsX family.</text>
</comment>
<name>PLSX_GEOTN</name>
<organism>
    <name type="scientific">Geobacillus thermodenitrificans (strain NG80-2)</name>
    <dbReference type="NCBI Taxonomy" id="420246"/>
    <lineage>
        <taxon>Bacteria</taxon>
        <taxon>Bacillati</taxon>
        <taxon>Bacillota</taxon>
        <taxon>Bacilli</taxon>
        <taxon>Bacillales</taxon>
        <taxon>Anoxybacillaceae</taxon>
        <taxon>Geobacillus</taxon>
    </lineage>
</organism>
<keyword id="KW-0963">Cytoplasm</keyword>
<keyword id="KW-0444">Lipid biosynthesis</keyword>
<keyword id="KW-0443">Lipid metabolism</keyword>
<keyword id="KW-0594">Phospholipid biosynthesis</keyword>
<keyword id="KW-1208">Phospholipid metabolism</keyword>
<keyword id="KW-0808">Transferase</keyword>